<name>AROQ_BACAA</name>
<accession>C3P7X7</accession>
<keyword id="KW-0028">Amino-acid biosynthesis</keyword>
<keyword id="KW-0057">Aromatic amino acid biosynthesis</keyword>
<keyword id="KW-0456">Lyase</keyword>
<comment type="function">
    <text evidence="1">Catalyzes a trans-dehydration via an enolate intermediate.</text>
</comment>
<comment type="catalytic activity">
    <reaction evidence="1">
        <text>3-dehydroquinate = 3-dehydroshikimate + H2O</text>
        <dbReference type="Rhea" id="RHEA:21096"/>
        <dbReference type="ChEBI" id="CHEBI:15377"/>
        <dbReference type="ChEBI" id="CHEBI:16630"/>
        <dbReference type="ChEBI" id="CHEBI:32364"/>
        <dbReference type="EC" id="4.2.1.10"/>
    </reaction>
</comment>
<comment type="pathway">
    <text evidence="1">Metabolic intermediate biosynthesis; chorismate biosynthesis; chorismate from D-erythrose 4-phosphate and phosphoenolpyruvate: step 3/7.</text>
</comment>
<comment type="subunit">
    <text evidence="1">Homododecamer.</text>
</comment>
<comment type="similarity">
    <text evidence="1">Belongs to the type-II 3-dehydroquinase family.</text>
</comment>
<feature type="chain" id="PRO_1000123679" description="3-dehydroquinate dehydratase">
    <location>
        <begin position="1"/>
        <end position="146"/>
    </location>
</feature>
<feature type="active site" description="Proton acceptor" evidence="1">
    <location>
        <position position="23"/>
    </location>
</feature>
<feature type="active site" description="Proton donor" evidence="1">
    <location>
        <position position="100"/>
    </location>
</feature>
<feature type="binding site" evidence="1">
    <location>
        <position position="74"/>
    </location>
    <ligand>
        <name>substrate</name>
    </ligand>
</feature>
<feature type="binding site" evidence="1">
    <location>
        <position position="80"/>
    </location>
    <ligand>
        <name>substrate</name>
    </ligand>
</feature>
<feature type="binding site" evidence="1">
    <location>
        <position position="87"/>
    </location>
    <ligand>
        <name>substrate</name>
    </ligand>
</feature>
<feature type="binding site" evidence="1">
    <location>
        <begin position="101"/>
        <end position="102"/>
    </location>
    <ligand>
        <name>substrate</name>
    </ligand>
</feature>
<feature type="binding site" evidence="1">
    <location>
        <position position="111"/>
    </location>
    <ligand>
        <name>substrate</name>
    </ligand>
</feature>
<feature type="site" description="Transition state stabilizer" evidence="1">
    <location>
        <position position="18"/>
    </location>
</feature>
<protein>
    <recommendedName>
        <fullName evidence="1">3-dehydroquinate dehydratase</fullName>
        <shortName evidence="1">3-dehydroquinase</shortName>
        <ecNumber evidence="1">4.2.1.10</ecNumber>
    </recommendedName>
    <alternativeName>
        <fullName evidence="1">Type II DHQase</fullName>
    </alternativeName>
</protein>
<proteinExistence type="inferred from homology"/>
<reference key="1">
    <citation type="submission" date="2009-04" db="EMBL/GenBank/DDBJ databases">
        <title>Genome sequence of Bacillus anthracis A0248.</title>
        <authorList>
            <person name="Dodson R.J."/>
            <person name="Munk A.C."/>
            <person name="Bruce D."/>
            <person name="Detter C."/>
            <person name="Tapia R."/>
            <person name="Sutton G."/>
            <person name="Sims D."/>
            <person name="Brettin T."/>
        </authorList>
    </citation>
    <scope>NUCLEOTIDE SEQUENCE [LARGE SCALE GENOMIC DNA]</scope>
    <source>
        <strain>A0248</strain>
    </source>
</reference>
<sequence length="146" mass="16165">MKKVLLVNGPNLNRLGVREVNVYGKGTLATLEADMKQEAEAMGVELECFQSNHEGAIIDRIHEAEDIYEGIILNPGAFTHYSYAIRDAIASISIPVIEVHISNIHQRESFRHESVTAAVCAGQIVGFGFYGYKLALFALMEKLREA</sequence>
<evidence type="ECO:0000255" key="1">
    <source>
        <dbReference type="HAMAP-Rule" id="MF_00169"/>
    </source>
</evidence>
<organism>
    <name type="scientific">Bacillus anthracis (strain A0248)</name>
    <dbReference type="NCBI Taxonomy" id="592021"/>
    <lineage>
        <taxon>Bacteria</taxon>
        <taxon>Bacillati</taxon>
        <taxon>Bacillota</taxon>
        <taxon>Bacilli</taxon>
        <taxon>Bacillales</taxon>
        <taxon>Bacillaceae</taxon>
        <taxon>Bacillus</taxon>
        <taxon>Bacillus cereus group</taxon>
    </lineage>
</organism>
<dbReference type="EC" id="4.2.1.10" evidence="1"/>
<dbReference type="EMBL" id="CP001598">
    <property type="protein sequence ID" value="ACQ46826.1"/>
    <property type="molecule type" value="Genomic_DNA"/>
</dbReference>
<dbReference type="RefSeq" id="WP_000757082.1">
    <property type="nucleotide sequence ID" value="NC_012659.1"/>
</dbReference>
<dbReference type="SMR" id="C3P7X7"/>
<dbReference type="GeneID" id="45024083"/>
<dbReference type="KEGG" id="bai:BAA_4439"/>
<dbReference type="HOGENOM" id="CLU_090968_3_0_9"/>
<dbReference type="UniPathway" id="UPA00053">
    <property type="reaction ID" value="UER00086"/>
</dbReference>
<dbReference type="GO" id="GO:0003855">
    <property type="term" value="F:3-dehydroquinate dehydratase activity"/>
    <property type="evidence" value="ECO:0007669"/>
    <property type="project" value="UniProtKB-UniRule"/>
</dbReference>
<dbReference type="GO" id="GO:0008652">
    <property type="term" value="P:amino acid biosynthetic process"/>
    <property type="evidence" value="ECO:0007669"/>
    <property type="project" value="UniProtKB-KW"/>
</dbReference>
<dbReference type="GO" id="GO:0009073">
    <property type="term" value="P:aromatic amino acid family biosynthetic process"/>
    <property type="evidence" value="ECO:0007669"/>
    <property type="project" value="UniProtKB-KW"/>
</dbReference>
<dbReference type="GO" id="GO:0009423">
    <property type="term" value="P:chorismate biosynthetic process"/>
    <property type="evidence" value="ECO:0007669"/>
    <property type="project" value="UniProtKB-UniRule"/>
</dbReference>
<dbReference type="GO" id="GO:0019631">
    <property type="term" value="P:quinate catabolic process"/>
    <property type="evidence" value="ECO:0007669"/>
    <property type="project" value="TreeGrafter"/>
</dbReference>
<dbReference type="CDD" id="cd00466">
    <property type="entry name" value="DHQase_II"/>
    <property type="match status" value="1"/>
</dbReference>
<dbReference type="Gene3D" id="3.40.50.9100">
    <property type="entry name" value="Dehydroquinase, class II"/>
    <property type="match status" value="1"/>
</dbReference>
<dbReference type="HAMAP" id="MF_00169">
    <property type="entry name" value="AroQ"/>
    <property type="match status" value="1"/>
</dbReference>
<dbReference type="InterPro" id="IPR001874">
    <property type="entry name" value="DHquinase_II"/>
</dbReference>
<dbReference type="InterPro" id="IPR018509">
    <property type="entry name" value="DHquinase_II_CS"/>
</dbReference>
<dbReference type="InterPro" id="IPR036441">
    <property type="entry name" value="DHquinase_II_sf"/>
</dbReference>
<dbReference type="NCBIfam" id="TIGR01088">
    <property type="entry name" value="aroQ"/>
    <property type="match status" value="1"/>
</dbReference>
<dbReference type="NCBIfam" id="NF003805">
    <property type="entry name" value="PRK05395.1-2"/>
    <property type="match status" value="1"/>
</dbReference>
<dbReference type="NCBIfam" id="NF003806">
    <property type="entry name" value="PRK05395.1-3"/>
    <property type="match status" value="1"/>
</dbReference>
<dbReference type="NCBIfam" id="NF003807">
    <property type="entry name" value="PRK05395.1-4"/>
    <property type="match status" value="1"/>
</dbReference>
<dbReference type="PANTHER" id="PTHR21272">
    <property type="entry name" value="CATABOLIC 3-DEHYDROQUINASE"/>
    <property type="match status" value="1"/>
</dbReference>
<dbReference type="PANTHER" id="PTHR21272:SF3">
    <property type="entry name" value="CATABOLIC 3-DEHYDROQUINASE"/>
    <property type="match status" value="1"/>
</dbReference>
<dbReference type="Pfam" id="PF01220">
    <property type="entry name" value="DHquinase_II"/>
    <property type="match status" value="1"/>
</dbReference>
<dbReference type="PIRSF" id="PIRSF001399">
    <property type="entry name" value="DHquinase_II"/>
    <property type="match status" value="1"/>
</dbReference>
<dbReference type="SUPFAM" id="SSF52304">
    <property type="entry name" value="Type II 3-dehydroquinate dehydratase"/>
    <property type="match status" value="1"/>
</dbReference>
<dbReference type="PROSITE" id="PS01029">
    <property type="entry name" value="DEHYDROQUINASE_II"/>
    <property type="match status" value="1"/>
</dbReference>
<gene>
    <name evidence="1" type="primary">aroQ</name>
    <name type="ordered locus">BAA_4439</name>
</gene>